<name>RL21_THESQ</name>
<keyword id="KW-0687">Ribonucleoprotein</keyword>
<keyword id="KW-0689">Ribosomal protein</keyword>
<keyword id="KW-0694">RNA-binding</keyword>
<keyword id="KW-0699">rRNA-binding</keyword>
<feature type="chain" id="PRO_1000143864" description="Large ribosomal subunit protein bL21">
    <location>
        <begin position="1"/>
        <end position="104"/>
    </location>
</feature>
<accession>B1LBJ6</accession>
<gene>
    <name evidence="1" type="primary">rplU</name>
    <name type="ordered locus">TRQ2_1350</name>
</gene>
<evidence type="ECO:0000255" key="1">
    <source>
        <dbReference type="HAMAP-Rule" id="MF_01363"/>
    </source>
</evidence>
<evidence type="ECO:0000305" key="2"/>
<reference key="1">
    <citation type="journal article" date="2011" name="J. Bacteriol.">
        <title>Genome sequence of Thermotoga sp. strain RQ2, a hyperthermophilic bacterium isolated from a geothermally heated region of the seafloor near Ribeira Quente, the Azores.</title>
        <authorList>
            <person name="Swithers K.S."/>
            <person name="DiPippo J.L."/>
            <person name="Bruce D.C."/>
            <person name="Detter C."/>
            <person name="Tapia R."/>
            <person name="Han S."/>
            <person name="Saunders E."/>
            <person name="Goodwin L.A."/>
            <person name="Han J."/>
            <person name="Woyke T."/>
            <person name="Pitluck S."/>
            <person name="Pennacchio L."/>
            <person name="Nolan M."/>
            <person name="Mikhailova N."/>
            <person name="Lykidis A."/>
            <person name="Land M.L."/>
            <person name="Brettin T."/>
            <person name="Stetter K.O."/>
            <person name="Nelson K.E."/>
            <person name="Gogarten J.P."/>
            <person name="Noll K.M."/>
        </authorList>
    </citation>
    <scope>NUCLEOTIDE SEQUENCE [LARGE SCALE GENOMIC DNA]</scope>
    <source>
        <strain>RQ2</strain>
    </source>
</reference>
<protein>
    <recommendedName>
        <fullName evidence="1">Large ribosomal subunit protein bL21</fullName>
    </recommendedName>
    <alternativeName>
        <fullName evidence="2">50S ribosomal protein L21</fullName>
    </alternativeName>
</protein>
<proteinExistence type="inferred from homology"/>
<dbReference type="EMBL" id="CP000969">
    <property type="protein sequence ID" value="ACB09694.1"/>
    <property type="molecule type" value="Genomic_DNA"/>
</dbReference>
<dbReference type="RefSeq" id="WP_008195075.1">
    <property type="nucleotide sequence ID" value="NC_010483.1"/>
</dbReference>
<dbReference type="SMR" id="B1LBJ6"/>
<dbReference type="KEGG" id="trq:TRQ2_1350"/>
<dbReference type="HOGENOM" id="CLU_061463_3_2_0"/>
<dbReference type="Proteomes" id="UP000001687">
    <property type="component" value="Chromosome"/>
</dbReference>
<dbReference type="GO" id="GO:0005737">
    <property type="term" value="C:cytoplasm"/>
    <property type="evidence" value="ECO:0007669"/>
    <property type="project" value="UniProtKB-ARBA"/>
</dbReference>
<dbReference type="GO" id="GO:1990904">
    <property type="term" value="C:ribonucleoprotein complex"/>
    <property type="evidence" value="ECO:0007669"/>
    <property type="project" value="UniProtKB-KW"/>
</dbReference>
<dbReference type="GO" id="GO:0005840">
    <property type="term" value="C:ribosome"/>
    <property type="evidence" value="ECO:0007669"/>
    <property type="project" value="UniProtKB-KW"/>
</dbReference>
<dbReference type="GO" id="GO:0019843">
    <property type="term" value="F:rRNA binding"/>
    <property type="evidence" value="ECO:0007669"/>
    <property type="project" value="UniProtKB-UniRule"/>
</dbReference>
<dbReference type="GO" id="GO:0003735">
    <property type="term" value="F:structural constituent of ribosome"/>
    <property type="evidence" value="ECO:0007669"/>
    <property type="project" value="InterPro"/>
</dbReference>
<dbReference type="GO" id="GO:0006412">
    <property type="term" value="P:translation"/>
    <property type="evidence" value="ECO:0007669"/>
    <property type="project" value="UniProtKB-UniRule"/>
</dbReference>
<dbReference type="HAMAP" id="MF_01363">
    <property type="entry name" value="Ribosomal_bL21"/>
    <property type="match status" value="1"/>
</dbReference>
<dbReference type="InterPro" id="IPR028909">
    <property type="entry name" value="bL21-like"/>
</dbReference>
<dbReference type="InterPro" id="IPR036164">
    <property type="entry name" value="bL21-like_sf"/>
</dbReference>
<dbReference type="InterPro" id="IPR001787">
    <property type="entry name" value="Ribosomal_bL21"/>
</dbReference>
<dbReference type="InterPro" id="IPR018258">
    <property type="entry name" value="Ribosomal_bL21_CS"/>
</dbReference>
<dbReference type="NCBIfam" id="TIGR00061">
    <property type="entry name" value="L21"/>
    <property type="match status" value="1"/>
</dbReference>
<dbReference type="PANTHER" id="PTHR21349">
    <property type="entry name" value="50S RIBOSOMAL PROTEIN L21"/>
    <property type="match status" value="1"/>
</dbReference>
<dbReference type="PANTHER" id="PTHR21349:SF0">
    <property type="entry name" value="LARGE RIBOSOMAL SUBUNIT PROTEIN BL21M"/>
    <property type="match status" value="1"/>
</dbReference>
<dbReference type="Pfam" id="PF00829">
    <property type="entry name" value="Ribosomal_L21p"/>
    <property type="match status" value="1"/>
</dbReference>
<dbReference type="SUPFAM" id="SSF141091">
    <property type="entry name" value="L21p-like"/>
    <property type="match status" value="1"/>
</dbReference>
<dbReference type="PROSITE" id="PS01169">
    <property type="entry name" value="RIBOSOMAL_L21"/>
    <property type="match status" value="1"/>
</dbReference>
<comment type="function">
    <text evidence="1">This protein binds to 23S rRNA in the presence of protein L20.</text>
</comment>
<comment type="subunit">
    <text evidence="1">Part of the 50S ribosomal subunit. Contacts protein L20.</text>
</comment>
<comment type="similarity">
    <text evidence="1">Belongs to the bacterial ribosomal protein bL21 family.</text>
</comment>
<sequence>MYAIVETAGRQYRVEEGKILYTERQKDYSPGDEIVFDRVVFVRKDGEVLVGKPYVEGAKVVGKVLEHAKARKVKTVKYRPRKNSKVEKGHRQWYTAIKIEKIEL</sequence>
<organism>
    <name type="scientific">Thermotoga sp. (strain RQ2)</name>
    <dbReference type="NCBI Taxonomy" id="126740"/>
    <lineage>
        <taxon>Bacteria</taxon>
        <taxon>Thermotogati</taxon>
        <taxon>Thermotogota</taxon>
        <taxon>Thermotogae</taxon>
        <taxon>Thermotogales</taxon>
        <taxon>Thermotogaceae</taxon>
        <taxon>Thermotoga</taxon>
    </lineage>
</organism>